<proteinExistence type="evidence at protein level"/>
<accession>O70405</accession>
<accession>Q6PGB2</accession>
<dbReference type="EC" id="2.7.11.1" evidence="15 16"/>
<dbReference type="EMBL" id="AF053756">
    <property type="protein sequence ID" value="AAC40118.1"/>
    <property type="molecule type" value="mRNA"/>
</dbReference>
<dbReference type="EMBL" id="AF072370">
    <property type="protein sequence ID" value="AAF23317.1"/>
    <property type="molecule type" value="mRNA"/>
</dbReference>
<dbReference type="EMBL" id="BC057121">
    <property type="protein sequence ID" value="AAH57121.1"/>
    <property type="molecule type" value="mRNA"/>
</dbReference>
<dbReference type="CCDS" id="CCDS19532.1"/>
<dbReference type="PIR" id="JW0051">
    <property type="entry name" value="JW0051"/>
</dbReference>
<dbReference type="RefSeq" id="NP_033495.2">
    <property type="nucleotide sequence ID" value="NM_009469.3"/>
</dbReference>
<dbReference type="SMR" id="O70405"/>
<dbReference type="BioGRID" id="204438">
    <property type="interactions" value="21"/>
</dbReference>
<dbReference type="ComplexPortal" id="CPX-380">
    <property type="entry name" value="ULK1-ATG13-RB1CC1-ATG101 autophagy initiation complex"/>
</dbReference>
<dbReference type="DIP" id="DIP-60541N"/>
<dbReference type="FunCoup" id="O70405">
    <property type="interactions" value="973"/>
</dbReference>
<dbReference type="IntAct" id="O70405">
    <property type="interactions" value="29"/>
</dbReference>
<dbReference type="MINT" id="O70405"/>
<dbReference type="STRING" id="10090.ENSMUSP00000143536"/>
<dbReference type="GlyGen" id="O70405">
    <property type="glycosylation" value="4 sites, 1 O-linked glycan (2 sites)"/>
</dbReference>
<dbReference type="iPTMnet" id="O70405"/>
<dbReference type="PhosphoSitePlus" id="O70405"/>
<dbReference type="jPOST" id="O70405"/>
<dbReference type="PaxDb" id="10090-ENSMUSP00000031490"/>
<dbReference type="PeptideAtlas" id="O70405"/>
<dbReference type="ProteomicsDB" id="298479"/>
<dbReference type="Pumba" id="O70405"/>
<dbReference type="DNASU" id="22241"/>
<dbReference type="GeneID" id="22241"/>
<dbReference type="KEGG" id="mmu:22241"/>
<dbReference type="UCSC" id="uc008yrq.1">
    <property type="organism name" value="mouse"/>
</dbReference>
<dbReference type="AGR" id="MGI:1270126"/>
<dbReference type="CTD" id="8408"/>
<dbReference type="MGI" id="MGI:1270126">
    <property type="gene designation" value="Ulk1"/>
</dbReference>
<dbReference type="eggNOG" id="KOG0595">
    <property type="taxonomic scope" value="Eukaryota"/>
</dbReference>
<dbReference type="InParanoid" id="O70405"/>
<dbReference type="OrthoDB" id="346907at2759"/>
<dbReference type="PhylomeDB" id="O70405"/>
<dbReference type="TreeFam" id="TF324551"/>
<dbReference type="BRENDA" id="2.7.11.1">
    <property type="organism ID" value="3474"/>
</dbReference>
<dbReference type="Reactome" id="R-MMU-1632852">
    <property type="pathway name" value="Macroautophagy"/>
</dbReference>
<dbReference type="Reactome" id="R-MMU-5357905">
    <property type="pathway name" value="Regulation of TNFR1 signaling"/>
</dbReference>
<dbReference type="Reactome" id="R-MMU-8854214">
    <property type="pathway name" value="TBC/RABGAPs"/>
</dbReference>
<dbReference type="Reactome" id="R-MMU-8876198">
    <property type="pathway name" value="RAB GEFs exchange GTP for GDP on RABs"/>
</dbReference>
<dbReference type="Reactome" id="R-MMU-8934903">
    <property type="pathway name" value="Receptor Mediated Mitophagy"/>
</dbReference>
<dbReference type="BioGRID-ORCS" id="22241">
    <property type="hits" value="4 hits in 81 CRISPR screens"/>
</dbReference>
<dbReference type="ChiTaRS" id="Ulk1">
    <property type="organism name" value="mouse"/>
</dbReference>
<dbReference type="PRO" id="PR:O70405"/>
<dbReference type="Proteomes" id="UP000000589">
    <property type="component" value="Unplaced"/>
</dbReference>
<dbReference type="RNAct" id="O70405">
    <property type="molecule type" value="protein"/>
</dbReference>
<dbReference type="GO" id="GO:1990316">
    <property type="term" value="C:Atg1/ULK1 kinase complex"/>
    <property type="evidence" value="ECO:0000314"/>
    <property type="project" value="MGI"/>
</dbReference>
<dbReference type="GO" id="GO:0005776">
    <property type="term" value="C:autophagosome"/>
    <property type="evidence" value="ECO:0000266"/>
    <property type="project" value="MGI"/>
</dbReference>
<dbReference type="GO" id="GO:0005737">
    <property type="term" value="C:cytoplasm"/>
    <property type="evidence" value="ECO:0000314"/>
    <property type="project" value="MGI"/>
</dbReference>
<dbReference type="GO" id="GO:0030659">
    <property type="term" value="C:cytoplasmic vesicle membrane"/>
    <property type="evidence" value="ECO:0000314"/>
    <property type="project" value="MGI"/>
</dbReference>
<dbReference type="GO" id="GO:0005829">
    <property type="term" value="C:cytosol"/>
    <property type="evidence" value="ECO:0000314"/>
    <property type="project" value="UniProtKB"/>
</dbReference>
<dbReference type="GO" id="GO:0016020">
    <property type="term" value="C:membrane"/>
    <property type="evidence" value="ECO:0000314"/>
    <property type="project" value="MGI"/>
</dbReference>
<dbReference type="GO" id="GO:0043005">
    <property type="term" value="C:neuron projection"/>
    <property type="evidence" value="ECO:0000314"/>
    <property type="project" value="MGI"/>
</dbReference>
<dbReference type="GO" id="GO:0043025">
    <property type="term" value="C:neuronal cell body"/>
    <property type="evidence" value="ECO:0000314"/>
    <property type="project" value="MGI"/>
</dbReference>
<dbReference type="GO" id="GO:0000407">
    <property type="term" value="C:phagophore assembly site"/>
    <property type="evidence" value="ECO:0000314"/>
    <property type="project" value="UniProtKB"/>
</dbReference>
<dbReference type="GO" id="GO:0034045">
    <property type="term" value="C:phagophore assembly site membrane"/>
    <property type="evidence" value="ECO:0000314"/>
    <property type="project" value="UniProtKB"/>
</dbReference>
<dbReference type="GO" id="GO:0005524">
    <property type="term" value="F:ATP binding"/>
    <property type="evidence" value="ECO:0007669"/>
    <property type="project" value="UniProtKB-KW"/>
</dbReference>
<dbReference type="GO" id="GO:0051879">
    <property type="term" value="F:Hsp90 protein binding"/>
    <property type="evidence" value="ECO:0000353"/>
    <property type="project" value="ParkinsonsUK-UCL"/>
</dbReference>
<dbReference type="GO" id="GO:0004672">
    <property type="term" value="F:protein kinase activity"/>
    <property type="evidence" value="ECO:0000314"/>
    <property type="project" value="MGI"/>
</dbReference>
<dbReference type="GO" id="GO:0019901">
    <property type="term" value="F:protein kinase binding"/>
    <property type="evidence" value="ECO:0000353"/>
    <property type="project" value="UniProtKB"/>
</dbReference>
<dbReference type="GO" id="GO:0106310">
    <property type="term" value="F:protein serine kinase activity"/>
    <property type="evidence" value="ECO:0007669"/>
    <property type="project" value="RHEA"/>
</dbReference>
<dbReference type="GO" id="GO:0004674">
    <property type="term" value="F:protein serine/threonine kinase activity"/>
    <property type="evidence" value="ECO:0000314"/>
    <property type="project" value="UniProtKB"/>
</dbReference>
<dbReference type="GO" id="GO:0000045">
    <property type="term" value="P:autophagosome assembly"/>
    <property type="evidence" value="ECO:0000314"/>
    <property type="project" value="ComplexPortal"/>
</dbReference>
<dbReference type="GO" id="GO:0006914">
    <property type="term" value="P:autophagy"/>
    <property type="evidence" value="ECO:0000315"/>
    <property type="project" value="UniProtKB"/>
</dbReference>
<dbReference type="GO" id="GO:0048675">
    <property type="term" value="P:axon extension"/>
    <property type="evidence" value="ECO:0000315"/>
    <property type="project" value="MGI"/>
</dbReference>
<dbReference type="GO" id="GO:0007411">
    <property type="term" value="P:axon guidance"/>
    <property type="evidence" value="ECO:0000315"/>
    <property type="project" value="MGI"/>
</dbReference>
<dbReference type="GO" id="GO:0007409">
    <property type="term" value="P:axonogenesis"/>
    <property type="evidence" value="ECO:0000314"/>
    <property type="project" value="MGI"/>
</dbReference>
<dbReference type="GO" id="GO:0034198">
    <property type="term" value="P:cellular response to amino acid starvation"/>
    <property type="evidence" value="ECO:0000316"/>
    <property type="project" value="ParkinsonsUK-UCL"/>
</dbReference>
<dbReference type="GO" id="GO:0031669">
    <property type="term" value="P:cellular response to nutrient levels"/>
    <property type="evidence" value="ECO:0000314"/>
    <property type="project" value="UniProtKB"/>
</dbReference>
<dbReference type="GO" id="GO:0021707">
    <property type="term" value="P:cerebellar granule cell differentiation"/>
    <property type="evidence" value="ECO:0000315"/>
    <property type="project" value="MGI"/>
</dbReference>
<dbReference type="GO" id="GO:0048668">
    <property type="term" value="P:collateral sprouting"/>
    <property type="evidence" value="ECO:0000315"/>
    <property type="project" value="MGI"/>
</dbReference>
<dbReference type="GO" id="GO:0051649">
    <property type="term" value="P:establishment of localization in cell"/>
    <property type="evidence" value="ECO:0000315"/>
    <property type="project" value="MGI"/>
</dbReference>
<dbReference type="GO" id="GO:0016236">
    <property type="term" value="P:macroautophagy"/>
    <property type="evidence" value="ECO:0000315"/>
    <property type="project" value="MGI"/>
</dbReference>
<dbReference type="GO" id="GO:0000423">
    <property type="term" value="P:mitophagy"/>
    <property type="evidence" value="ECO:0000315"/>
    <property type="project" value="ParkinsonsUK-UCL"/>
</dbReference>
<dbReference type="GO" id="GO:0008285">
    <property type="term" value="P:negative regulation of cell population proliferation"/>
    <property type="evidence" value="ECO:0000314"/>
    <property type="project" value="ComplexPortal"/>
</dbReference>
<dbReference type="GO" id="GO:0048671">
    <property type="term" value="P:negative regulation of collateral sprouting"/>
    <property type="evidence" value="ECO:0000315"/>
    <property type="project" value="MGI"/>
</dbReference>
<dbReference type="GO" id="GO:0001764">
    <property type="term" value="P:neuron migration"/>
    <property type="evidence" value="ECO:0000315"/>
    <property type="project" value="MGI"/>
</dbReference>
<dbReference type="GO" id="GO:0031175">
    <property type="term" value="P:neuron projection development"/>
    <property type="evidence" value="ECO:0000315"/>
    <property type="project" value="MGI"/>
</dbReference>
<dbReference type="GO" id="GO:0018105">
    <property type="term" value="P:peptidyl-serine phosphorylation"/>
    <property type="evidence" value="ECO:0000314"/>
    <property type="project" value="ParkinsonsUK-UCL"/>
</dbReference>
<dbReference type="GO" id="GO:0010508">
    <property type="term" value="P:positive regulation of autophagy"/>
    <property type="evidence" value="ECO:0000314"/>
    <property type="project" value="ComplexPortal"/>
</dbReference>
<dbReference type="GO" id="GO:0008104">
    <property type="term" value="P:protein localization"/>
    <property type="evidence" value="ECO:0000316"/>
    <property type="project" value="MGI"/>
</dbReference>
<dbReference type="GO" id="GO:0021933">
    <property type="term" value="P:radial glia guided migration of cerebellar granule cell"/>
    <property type="evidence" value="ECO:0000315"/>
    <property type="project" value="MGI"/>
</dbReference>
<dbReference type="GO" id="GO:0007265">
    <property type="term" value="P:Ras protein signal transduction"/>
    <property type="evidence" value="ECO:0000314"/>
    <property type="project" value="MGI"/>
</dbReference>
<dbReference type="GO" id="GO:0031623">
    <property type="term" value="P:receptor internalization"/>
    <property type="evidence" value="ECO:0000315"/>
    <property type="project" value="MGI"/>
</dbReference>
<dbReference type="GO" id="GO:0010468">
    <property type="term" value="P:regulation of gene expression"/>
    <property type="evidence" value="ECO:0000316"/>
    <property type="project" value="ParkinsonsUK-UCL"/>
</dbReference>
<dbReference type="GO" id="GO:0051386">
    <property type="term" value="P:regulation of neurotrophin TRK receptor signaling pathway"/>
    <property type="evidence" value="ECO:0000315"/>
    <property type="project" value="MGI"/>
</dbReference>
<dbReference type="GO" id="GO:0098780">
    <property type="term" value="P:response to mitochondrial depolarisation"/>
    <property type="evidence" value="ECO:0000315"/>
    <property type="project" value="BHF-UCL"/>
</dbReference>
<dbReference type="GO" id="GO:0042594">
    <property type="term" value="P:response to starvation"/>
    <property type="evidence" value="ECO:0000314"/>
    <property type="project" value="UniProtKB"/>
</dbReference>
<dbReference type="GO" id="GO:0160038">
    <property type="term" value="P:somatic sensory system development"/>
    <property type="evidence" value="ECO:0000316"/>
    <property type="project" value="MGI"/>
</dbReference>
<dbReference type="CDD" id="cd14202">
    <property type="entry name" value="STKc_ULK1"/>
    <property type="match status" value="1"/>
</dbReference>
<dbReference type="FunFam" id="1.10.510.10:FF:000128">
    <property type="entry name" value="serine/threonine-protein kinase ULK2 isoform X2"/>
    <property type="match status" value="1"/>
</dbReference>
<dbReference type="FunFam" id="3.30.200.20:FF:000149">
    <property type="entry name" value="serine/threonine-protein kinase unc-51 isoform X1"/>
    <property type="match status" value="1"/>
</dbReference>
<dbReference type="Gene3D" id="3.30.200.20">
    <property type="entry name" value="Phosphorylase Kinase, domain 1"/>
    <property type="match status" value="1"/>
</dbReference>
<dbReference type="Gene3D" id="1.10.510.10">
    <property type="entry name" value="Transferase(Phosphotransferase) domain 1"/>
    <property type="match status" value="1"/>
</dbReference>
<dbReference type="InterPro" id="IPR045269">
    <property type="entry name" value="Atg1-like"/>
</dbReference>
<dbReference type="InterPro" id="IPR048941">
    <property type="entry name" value="ATG1-like_MIT2"/>
</dbReference>
<dbReference type="InterPro" id="IPR022708">
    <property type="entry name" value="Atg1-like_tMIT"/>
</dbReference>
<dbReference type="InterPro" id="IPR011009">
    <property type="entry name" value="Kinase-like_dom_sf"/>
</dbReference>
<dbReference type="InterPro" id="IPR000719">
    <property type="entry name" value="Prot_kinase_dom"/>
</dbReference>
<dbReference type="InterPro" id="IPR017441">
    <property type="entry name" value="Protein_kinase_ATP_BS"/>
</dbReference>
<dbReference type="InterPro" id="IPR016237">
    <property type="entry name" value="Ser/Thr_kin_STPK_Ulk-1/2"/>
</dbReference>
<dbReference type="InterPro" id="IPR008271">
    <property type="entry name" value="Ser/Thr_kinase_AS"/>
</dbReference>
<dbReference type="PANTHER" id="PTHR24348">
    <property type="entry name" value="SERINE/THREONINE-PROTEIN KINASE UNC-51-RELATED"/>
    <property type="match status" value="1"/>
</dbReference>
<dbReference type="PANTHER" id="PTHR24348:SF19">
    <property type="entry name" value="SERINE_THREONINE-PROTEIN KINASE ULK1"/>
    <property type="match status" value="1"/>
</dbReference>
<dbReference type="Pfam" id="PF12063">
    <property type="entry name" value="ATG1-like_MIT1"/>
    <property type="match status" value="1"/>
</dbReference>
<dbReference type="Pfam" id="PF21127">
    <property type="entry name" value="ATG1-like_MIT2"/>
    <property type="match status" value="1"/>
</dbReference>
<dbReference type="Pfam" id="PF00069">
    <property type="entry name" value="Pkinase"/>
    <property type="match status" value="1"/>
</dbReference>
<dbReference type="PIRSF" id="PIRSF000580">
    <property type="entry name" value="Ser/Thr_PK_STPK_ULK-1/2"/>
    <property type="match status" value="1"/>
</dbReference>
<dbReference type="SMART" id="SM00220">
    <property type="entry name" value="S_TKc"/>
    <property type="match status" value="1"/>
</dbReference>
<dbReference type="SUPFAM" id="SSF56112">
    <property type="entry name" value="Protein kinase-like (PK-like)"/>
    <property type="match status" value="1"/>
</dbReference>
<dbReference type="PROSITE" id="PS00107">
    <property type="entry name" value="PROTEIN_KINASE_ATP"/>
    <property type="match status" value="1"/>
</dbReference>
<dbReference type="PROSITE" id="PS50011">
    <property type="entry name" value="PROTEIN_KINASE_DOM"/>
    <property type="match status" value="1"/>
</dbReference>
<dbReference type="PROSITE" id="PS00108">
    <property type="entry name" value="PROTEIN_KINASE_ST"/>
    <property type="match status" value="1"/>
</dbReference>
<reference key="1">
    <citation type="journal article" date="1998" name="Biochem. Biophys. Res. Commun.">
        <title>Identification of mouse ULK1, a novel protein kinase structurally related to C. elegans UNC-51.</title>
        <authorList>
            <person name="Yan J."/>
            <person name="Kuroyanagi H."/>
            <person name="Kuroiwa A."/>
            <person name="Matsuda Y."/>
            <person name="Tokumitsu H."/>
            <person name="Tomoda T."/>
            <person name="Shirasawa T."/>
            <person name="Muramatsu M.-A."/>
        </authorList>
    </citation>
    <scope>NUCLEOTIDE SEQUENCE [MRNA]</scope>
    <source>
        <tissue>Brain</tissue>
    </source>
</reference>
<reference key="2">
    <citation type="journal article" date="1999" name="Neuron">
        <title>A mouse serine/threonine kinase homologous to C. elegans UNC51 functions in parallel fiber formation of cerebellar granule neurons.</title>
        <authorList>
            <person name="Tomoda T."/>
            <person name="Bhatt R.S."/>
            <person name="Kuroyanagi H."/>
            <person name="Shirasawa T."/>
            <person name="Hatten M.E."/>
        </authorList>
    </citation>
    <scope>NUCLEOTIDE SEQUENCE [MRNA]</scope>
    <scope>FUNCTION</scope>
    <source>
        <strain>C57BL/6J</strain>
        <tissue>Brain</tissue>
    </source>
</reference>
<reference key="3">
    <citation type="journal article" date="2004" name="Genome Res.">
        <title>The status, quality, and expansion of the NIH full-length cDNA project: the Mammalian Gene Collection (MGC).</title>
        <authorList>
            <consortium name="The MGC Project Team"/>
        </authorList>
    </citation>
    <scope>NUCLEOTIDE SEQUENCE [LARGE SCALE MRNA]</scope>
    <source>
        <strain>C57BL/6J</strain>
        <tissue>Brain</tissue>
    </source>
</reference>
<reference key="4">
    <citation type="journal article" date="2009" name="J. Biol. Chem.">
        <title>ULK1.ATG13.FIP200 complex mediates mTOR signaling and is essential for autophagy.</title>
        <authorList>
            <person name="Ganley I.G."/>
            <person name="Lam du H."/>
            <person name="Wang J."/>
            <person name="Ding X."/>
            <person name="Chen S."/>
            <person name="Jiang X."/>
        </authorList>
    </citation>
    <scope>FUNCTION</scope>
    <scope>INTERACTION WITH ATG13 AND RB1CC1</scope>
    <scope>PHOSPHORYLATION</scope>
    <scope>SUBCELLULAR LOCATION</scope>
</reference>
<reference key="5">
    <citation type="journal article" date="2010" name="Cell">
        <title>A tissue-specific atlas of mouse protein phosphorylation and expression.</title>
        <authorList>
            <person name="Huttlin E.L."/>
            <person name="Jedrychowski M.P."/>
            <person name="Elias J.E."/>
            <person name="Goswami T."/>
            <person name="Rad R."/>
            <person name="Beausoleil S.A."/>
            <person name="Villen J."/>
            <person name="Haas W."/>
            <person name="Sowa M.E."/>
            <person name="Gygi S.P."/>
        </authorList>
    </citation>
    <scope>PHOSPHORYLATION [LARGE SCALE ANALYSIS] AT SER-450; SER-521; THR-635; SER-637; SER-638 AND SER-757</scope>
    <scope>IDENTIFICATION BY MASS SPECTROMETRY [LARGE SCALE ANALYSIS]</scope>
    <source>
        <tissue>Brown adipose tissue</tissue>
        <tissue>Heart</tissue>
        <tissue>Kidney</tissue>
        <tissue>Liver</tissue>
        <tissue>Lung</tissue>
        <tissue>Pancreas</tissue>
        <tissue>Spleen</tissue>
        <tissue>Testis</tissue>
    </source>
</reference>
<reference key="6">
    <citation type="journal article" date="2011" name="Autophagy">
        <title>Ulk1-mediated phosphorylation of AMPK constitutes a negative regulatory feedback loop.</title>
        <authorList>
            <person name="Loffler A.S."/>
            <person name="Alers S."/>
            <person name="Dieterle A.M."/>
            <person name="Keppeler H."/>
            <person name="Franz-Wachtel M."/>
            <person name="Kundu M."/>
            <person name="Campbell D.G."/>
            <person name="Wesselborg S."/>
            <person name="Alessi D.R."/>
            <person name="Stork B."/>
        </authorList>
    </citation>
    <scope>FUNCTION IN PHOSPHORYLATION OF AMPK</scope>
</reference>
<reference key="7">
    <citation type="journal article" date="2011" name="Nat. Cell Biol.">
        <title>AMPK and mTOR regulate autophagy through direct phosphorylation of Ulk1.</title>
        <authorList>
            <person name="Kim J."/>
            <person name="Kundu M."/>
            <person name="Viollet B."/>
            <person name="Guan K.L."/>
        </authorList>
    </citation>
    <scope>FUNCTION</scope>
    <scope>AUTOPHOSPHORYLATION</scope>
    <scope>PHOSPHORYLATION AT SER-317; SER-757 AND SER-777</scope>
    <scope>MUTAGENESIS OF LYS-46; SER-317; SER-494; SER-555; THR-574; SER-622; THR-624; SER-693; SER-757; SER-777 AND SER-811</scope>
</reference>
<reference key="8">
    <citation type="journal article" date="2011" name="Science">
        <title>Phosphorylation of ULK1 (hATG1) by AMP-activated protein kinase connects energy sensing to mitophagy.</title>
        <authorList>
            <person name="Egan D.F."/>
            <person name="Shackelford D.B."/>
            <person name="Mihaylova M.M."/>
            <person name="Gelino S."/>
            <person name="Kohnz R.A."/>
            <person name="Mair W."/>
            <person name="Vasquez D.S."/>
            <person name="Joshi A."/>
            <person name="Gwinn D.M."/>
            <person name="Taylor R."/>
            <person name="Asara J.M."/>
            <person name="Fitzpatrick J."/>
            <person name="Dillin A."/>
            <person name="Viollet B."/>
            <person name="Kundu M."/>
            <person name="Hansen M."/>
            <person name="Shaw R.J."/>
        </authorList>
    </citation>
    <scope>FUNCTION</scope>
    <scope>AUTOPHOSPHORYLATION</scope>
    <scope>PHOSPHORYLATION AT SER-467; SER-555; THR-574 AND SER-637</scope>
    <scope>MUTAGENESIS OF LYS-46</scope>
</reference>
<reference key="9">
    <citation type="journal article" date="2014" name="FEBS J.">
        <title>Sestrin2 promotes Unc-51-like kinase 1 mediated phosphorylation of p62/sequestosome-1.</title>
        <authorList>
            <person name="Ro S.H."/>
            <person name="Semple I.A."/>
            <person name="Park H."/>
            <person name="Park H."/>
            <person name="Park H.W."/>
            <person name="Kim M."/>
            <person name="Kim J.S."/>
            <person name="Lee J.H."/>
        </authorList>
    </citation>
    <scope>FUNCTION</scope>
    <scope>INTERACTION WITH SESN2 AND SQSTM1</scope>
</reference>
<reference key="10">
    <citation type="journal article" date="2012" name="Science">
        <title>GSK3-TIP60-ULK1 signaling pathway links growth factor deprivation to autophagy.</title>
        <authorList>
            <person name="Lin S.Y."/>
            <person name="Li T.Y."/>
            <person name="Liu Q."/>
            <person name="Zhang C."/>
            <person name="Li X."/>
            <person name="Chen Y."/>
            <person name="Zhang S.M."/>
            <person name="Lian G."/>
            <person name="Liu Q."/>
            <person name="Ruan K."/>
            <person name="Wang Z."/>
            <person name="Zhang C.S."/>
            <person name="Chien K.Y."/>
            <person name="Wu J."/>
            <person name="Li Q."/>
            <person name="Han J."/>
            <person name="Lin S.C."/>
        </authorList>
    </citation>
    <scope>CATALYTIC ACTIVITY</scope>
    <scope>ACTIVITY REGULATION</scope>
    <scope>ACETYLATION AT LYS-162 AND LYS-606</scope>
    <scope>MUTAGENESIS OF LYS-162 AND LYS-606</scope>
</reference>
<reference key="11">
    <citation type="journal article" date="2013" name="J. Biol. Chem.">
        <title>Skeletal muscle-derived myonectin activates the mammalian target of rapamycin (mTOR) pathway to suppress autophagy in liver.</title>
        <authorList>
            <person name="Seldin M.M."/>
            <person name="Lei X."/>
            <person name="Tan S.Y."/>
            <person name="Stanson K.P."/>
            <person name="Wei Z."/>
            <person name="Wong G.W."/>
        </authorList>
    </citation>
    <scope>PHOSPHORYLATION AT SER-757</scope>
</reference>
<reference key="12">
    <citation type="journal article" date="2015" name="PLoS Genet.">
        <title>Proteotoxic stress induces phosphorylation of p62/SQSTM1 by ULK1 to regulate selective autophagic clearance of protein aggregates.</title>
        <authorList>
            <person name="Lim J."/>
            <person name="Lachenmayer M.L."/>
            <person name="Wu S."/>
            <person name="Liu W."/>
            <person name="Kundu M."/>
            <person name="Wang R."/>
            <person name="Komatsu M."/>
            <person name="Oh Y.J."/>
            <person name="Zhao Y."/>
            <person name="Yue Z."/>
        </authorList>
    </citation>
    <scope>FUNCTION</scope>
    <scope>CATALYTIC ACTIVITY</scope>
    <scope>MUTAGENESIS OF LYS-46</scope>
</reference>
<name>ULK1_MOUSE</name>
<feature type="chain" id="PRO_0000086781" description="Serine/threonine-protein kinase ULK1">
    <location>
        <begin position="1"/>
        <end position="1051"/>
    </location>
</feature>
<feature type="domain" description="Protein kinase" evidence="2">
    <location>
        <begin position="16"/>
        <end position="278"/>
    </location>
</feature>
<feature type="region of interest" description="Disordered" evidence="4">
    <location>
        <begin position="283"/>
        <end position="323"/>
    </location>
</feature>
<feature type="region of interest" description="Interaction with GABARAP and GABARAPL2" evidence="1">
    <location>
        <begin position="287"/>
        <end position="416"/>
    </location>
</feature>
<feature type="region of interest" description="Disordered" evidence="4">
    <location>
        <begin position="335"/>
        <end position="358"/>
    </location>
</feature>
<feature type="region of interest" description="Disordered" evidence="4">
    <location>
        <begin position="394"/>
        <end position="554"/>
    </location>
</feature>
<feature type="region of interest" description="Disordered" evidence="4">
    <location>
        <begin position="661"/>
        <end position="686"/>
    </location>
</feature>
<feature type="region of interest" description="Disordered" evidence="4">
    <location>
        <begin position="727"/>
        <end position="787"/>
    </location>
</feature>
<feature type="region of interest" description="C-terminal domain; mediates interaction with SESN2" evidence="1">
    <location>
        <begin position="829"/>
        <end position="1051"/>
    </location>
</feature>
<feature type="compositionally biased region" description="Low complexity" evidence="4">
    <location>
        <begin position="295"/>
        <end position="318"/>
    </location>
</feature>
<feature type="compositionally biased region" description="Low complexity" evidence="4">
    <location>
        <begin position="340"/>
        <end position="349"/>
    </location>
</feature>
<feature type="compositionally biased region" description="Low complexity" evidence="4">
    <location>
        <begin position="400"/>
        <end position="423"/>
    </location>
</feature>
<feature type="compositionally biased region" description="Polar residues" evidence="4">
    <location>
        <begin position="437"/>
        <end position="459"/>
    </location>
</feature>
<feature type="compositionally biased region" description="Gly residues" evidence="4">
    <location>
        <begin position="731"/>
        <end position="745"/>
    </location>
</feature>
<feature type="compositionally biased region" description="Low complexity" evidence="4">
    <location>
        <begin position="774"/>
        <end position="787"/>
    </location>
</feature>
<feature type="active site" description="Proton acceptor" evidence="2 3">
    <location>
        <position position="138"/>
    </location>
</feature>
<feature type="binding site" evidence="2">
    <location>
        <begin position="22"/>
        <end position="30"/>
    </location>
    <ligand>
        <name>ATP</name>
        <dbReference type="ChEBI" id="CHEBI:30616"/>
    </ligand>
</feature>
<feature type="binding site" evidence="14">
    <location>
        <position position="46"/>
    </location>
    <ligand>
        <name>ATP</name>
        <dbReference type="ChEBI" id="CHEBI:30616"/>
    </ligand>
</feature>
<feature type="modified residue" description="N6-acetyllysine" evidence="10">
    <location>
        <position position="162"/>
    </location>
</feature>
<feature type="modified residue" description="Phosphoserine; by AMPK" evidence="8">
    <location>
        <position position="317"/>
    </location>
</feature>
<feature type="modified residue" description="Phosphoserine" evidence="1">
    <location>
        <position position="403"/>
    </location>
</feature>
<feature type="modified residue" description="Phosphoserine" evidence="17">
    <location>
        <position position="450"/>
    </location>
</feature>
<feature type="modified residue" description="Phosphothreonine" evidence="1">
    <location>
        <position position="456"/>
    </location>
</feature>
<feature type="modified residue" description="Phosphoserine" evidence="7">
    <location>
        <position position="467"/>
    </location>
</feature>
<feature type="modified residue" description="Phosphoserine" evidence="1">
    <location>
        <position position="477"/>
    </location>
</feature>
<feature type="modified residue" description="Phosphoserine" evidence="1">
    <location>
        <position position="479"/>
    </location>
</feature>
<feature type="modified residue" description="Phosphoserine" evidence="17">
    <location>
        <position position="521"/>
    </location>
</feature>
<feature type="modified residue" description="Phosphoserine; by AMPK" evidence="7">
    <location>
        <position position="555"/>
    </location>
</feature>
<feature type="modified residue" description="Phosphothreonine" evidence="7">
    <location>
        <position position="574"/>
    </location>
</feature>
<feature type="modified residue" description="N6-acetyllysine" evidence="10">
    <location>
        <position position="606"/>
    </location>
</feature>
<feature type="modified residue" description="Phosphothreonine" evidence="17">
    <location>
        <position position="635"/>
    </location>
</feature>
<feature type="modified residue" description="Phosphoserine; by AMPK" evidence="7 17">
    <location>
        <position position="637"/>
    </location>
</feature>
<feature type="modified residue" description="Phosphoserine" evidence="17">
    <location>
        <position position="638"/>
    </location>
</feature>
<feature type="modified residue" description="Phosphoserine; by MTOR" evidence="8 11 17">
    <location>
        <position position="757"/>
    </location>
</feature>
<feature type="modified residue" description="Phosphoserine" evidence="1">
    <location>
        <position position="774"/>
    </location>
</feature>
<feature type="modified residue" description="Phosphoserine; by AMPK" evidence="8">
    <location>
        <position position="777"/>
    </location>
</feature>
<feature type="mutagenesis site" description="Abolished serine/threonine-protein kinase activity." evidence="13">
    <original>K</original>
    <variation>I</variation>
    <location>
        <position position="46"/>
    </location>
</feature>
<feature type="mutagenesis site" description="Loss of kinase activity and autophosphorylation." evidence="7 8">
    <original>K</original>
    <variation>R</variation>
    <location>
        <position position="46"/>
    </location>
</feature>
<feature type="mutagenesis site" description="In K2R; abolished acetylation by KAT5/TIP60 and decreased kinase activity; when associated with R-606." evidence="10">
    <original>K</original>
    <variation>R</variation>
    <location>
        <position position="162"/>
    </location>
</feature>
<feature type="mutagenesis site" description="Impairs phosphorylation by AMPK and ability to promote autophagy; when associated with A-777." evidence="8">
    <original>S</original>
    <variation>A</variation>
    <location>
        <position position="317"/>
    </location>
</feature>
<feature type="mutagenesis site" description="Does not affect phosphorylation by AMPK in vitro." evidence="8">
    <original>S</original>
    <variation>A</variation>
    <location>
        <position position="494"/>
    </location>
</feature>
<feature type="mutagenesis site" description="Does not affect phosphorylation by AMPK in vitro." evidence="8">
    <original>S</original>
    <variation>A</variation>
    <location>
        <position position="555"/>
    </location>
</feature>
<feature type="mutagenesis site" description="Does not affect phosphorylation by AMPK in vitro." evidence="8">
    <original>T</original>
    <variation>A</variation>
    <location>
        <position position="574"/>
    </location>
</feature>
<feature type="mutagenesis site" description="In K2R; abolished acetylation by KAT5/TIP60 and decreased kinase activity; when associated with R-162." evidence="10">
    <original>K</original>
    <variation>R</variation>
    <location>
        <position position="606"/>
    </location>
</feature>
<feature type="mutagenesis site" description="Does not affect phosphorylation by AMPK in vitro." evidence="8">
    <original>S</original>
    <variation>A</variation>
    <location>
        <position position="622"/>
    </location>
</feature>
<feature type="mutagenesis site" description="Does not affect phosphorylation by AMPK in vitro." evidence="8">
    <original>T</original>
    <variation>A</variation>
    <location>
        <position position="624"/>
    </location>
</feature>
<feature type="mutagenesis site" description="Does not affect phosphorylation by AMPK in vitro." evidence="8">
    <original>S</original>
    <variation>A</variation>
    <location>
        <position position="693"/>
    </location>
</feature>
<feature type="mutagenesis site" description="Impairs interaction with AMPK and subsequent phosphorylation by AMPK." evidence="8">
    <original>S</original>
    <variation>A</variation>
    <variation>D</variation>
    <location>
        <position position="757"/>
    </location>
</feature>
<feature type="mutagenesis site" description="Impairs phosphorylation by AMPK and ability to promote autophagy; when associated with A-317." evidence="8">
    <original>S</original>
    <variation>A</variation>
    <location>
        <position position="777"/>
    </location>
</feature>
<feature type="mutagenesis site" description="Does not affect phosphorylation by AMPK in vitro." evidence="8">
    <original>S</original>
    <variation>A</variation>
    <location>
        <position position="811"/>
    </location>
</feature>
<feature type="sequence conflict" description="In Ref. 3; AAH57121." evidence="14" ref="3">
    <original>T</original>
    <variation>S</variation>
    <location>
        <position position="469"/>
    </location>
</feature>
<sequence length="1051" mass="112463">MEPGRGGVETVGKFEFSRKDLIGHGAFAVVFKGRHREKHDLEVAVKCINKKNLAKSQTLLGKEIKILKELKHENIVALYDFQEMANSVYLVMEYCNGGDLADYLHTMRTLSEDTVRLFLQQIAGAMRLLHSKGIIHRDLKPQNILLSNPGGRRANPSNIRVKIADFGFARYLQSNMMAATLCGSPMYMAPEVIMSQHYDGKADLWSIGTIVYQCLTGKAPFQASSPQDLRLFYEKNKTLVPAIPRETSAPLRQLLLALLQRNHKDRMDFDEFFHHPFLDASTPIKKSPPVPVPSYPSSGSGSSSSSSSASHLASPPSLGEMPQLQKTLTSPADAAGFLQGSRDSGGSSKDSCDTDDFVMVPAQFPGDLVAEAASAKPPPDSLLCSGSSLVASAGLESHGRTPSPSPTCSSSPSPSGRPGPFSSNRYGASVPIPVPTQVHNYQRIEQNLQSPTQQQTARSSAIRRSGSTTPLGFGRASPSPPSHTDGAMLARKLSLGGGRPYTPSPQVGTIPERPSWSRVPSPQGADVRVGRSPRPGSSVPEHSPRTTGLGCRLHSAPNLSDFHVVRPKLPKPPTDPLGATFSPPQTSAPQPCPGLQSCRPLRGSPKLPDFLQRSPLPPILGSPTKAGPSFDFPKTPSSQNLLTLLARQGVVMTPPRNRTLPDLSEASPFHGQQLGSGLRPAEDTRGPFGRSFSTSRITDLLLKAAFGTQASDSGSTDSLQEKPMEIAPSAGFGGTLHPGARGGGASSPAPVVFTVGSPPSGATPPQSTRTRMFSVGSSSSLGSTGSSSARHLVPGACGEAPELSAPGHCCSLADPLAANLEGAVTFEAPDLPEETLMEQEHTETLHSLRFTLAFAQQVLEIAALKGSASEAAGGPEYQLQESVVADQISQLSREWGFAEQLVLYLKVAELLSSGLQTAIDQIRAGKLCLSSTVKQVVRRLNELYKASVVSCQGLSLRLQRFFLDKQRLLDGIHGVTAERLILSHAVQMVQSAALDEMFQHREGCVPRYHKALLLLEGLQHTLTDQADIENIAKCKLCIERRLSALLSGVYA</sequence>
<gene>
    <name type="primary">Ulk1</name>
</gene>
<comment type="function">
    <text evidence="1 5 6 7 8 9 12 13">Serine/threonine-protein kinase involved in autophagy in response to starvation (PubMed:10624947, PubMed:19258318, PubMed:21205641, PubMed:21258367, PubMed:21460634, PubMed:25040165, PubMed:25723488). Acts upstream of phosphatidylinositol 3-kinase PIK3C3 to regulate the formation of autophagophores, the precursors of autophagosomes (PubMed:10624947, PubMed:19258318, PubMed:21205641, PubMed:21258367, PubMed:21460634, PubMed:25040165). Part of regulatory feedback loops in autophagy: acts both as a downstream effector and negative regulator of mammalian target of rapamycin complex 1 (mTORC1) via interaction with RPTOR (PubMed:21205641, PubMed:21258367). Activated via phosphorylation by AMPK and also acts as a regulator of AMPK by mediating phosphorylation of AMPK subunits PRKAA1, PRKAB2 and PRKAG1, leading to negatively regulate AMPK activity (PubMed:21460634). May phosphorylate ATG13/KIAA0652 and RPTOR; however such data need additional evidences (PubMed:19258318). Plays a role early in neuronal differentiation and is required for granule cell axon formation (By similarity). Also phosphorylates SESN2 and SQSTM1 to regulate autophagy (PubMed:25040165, PubMed:25723488). Phosphorylates FLCN, promoting autophagy (By similarity). Phosphorylates AMBRA1 in response to autophagy induction, releasing AMBRA1 from the cytoskeletal docking site to induce autophagosome nucleation (By similarity). Phosphorylates ATG4B, leading to inhibit autophagy by decreasing both proteolytic activation and delipidation activities of ATG4B (By similarity).</text>
</comment>
<comment type="catalytic activity">
    <reaction evidence="15 16">
        <text>L-seryl-[protein] + ATP = O-phospho-L-seryl-[protein] + ADP + H(+)</text>
        <dbReference type="Rhea" id="RHEA:17989"/>
        <dbReference type="Rhea" id="RHEA-COMP:9863"/>
        <dbReference type="Rhea" id="RHEA-COMP:11604"/>
        <dbReference type="ChEBI" id="CHEBI:15378"/>
        <dbReference type="ChEBI" id="CHEBI:29999"/>
        <dbReference type="ChEBI" id="CHEBI:30616"/>
        <dbReference type="ChEBI" id="CHEBI:83421"/>
        <dbReference type="ChEBI" id="CHEBI:456216"/>
        <dbReference type="EC" id="2.7.11.1"/>
    </reaction>
</comment>
<comment type="catalytic activity">
    <reaction evidence="15">
        <text>L-threonyl-[protein] + ATP = O-phospho-L-threonyl-[protein] + ADP + H(+)</text>
        <dbReference type="Rhea" id="RHEA:46608"/>
        <dbReference type="Rhea" id="RHEA-COMP:11060"/>
        <dbReference type="Rhea" id="RHEA-COMP:11605"/>
        <dbReference type="ChEBI" id="CHEBI:15378"/>
        <dbReference type="ChEBI" id="CHEBI:30013"/>
        <dbReference type="ChEBI" id="CHEBI:30616"/>
        <dbReference type="ChEBI" id="CHEBI:61977"/>
        <dbReference type="ChEBI" id="CHEBI:456216"/>
        <dbReference type="EC" id="2.7.11.1"/>
    </reaction>
</comment>
<comment type="activity regulation">
    <text evidence="1 10">Acetylation by KAT5/TIP60 stimulates the protein kinase activity (PubMed:22539723). The protein kinase activity is activated by unanchored 'Lys-63'-linked polyubiquitin chains: unanchored 'Lys-63'-linked polyubiquitin chains are catalyzed by TRIM32 in an AMBRA1-dependent manner (By similarity).</text>
</comment>
<comment type="subunit">
    <text evidence="1 6 12">Interacts with GABARAP and GABARAPL2 (By similarity). Interacts (via C-terminus) with ATG13 (PubMed:19258318). Part of a complex consisting of ATG13, ATG101, ULK1 and RB1CC1 (PubMed:19258318). Associates with the mammalian target of rapamycin complex 1 (mTORC1) through an interaction with RPTOR; the association depends on nutrient conditions and is reduced during starvation (By similarity). Interacts with FEZ1; SCOC interferes with FEZ1-binding (By similarity). Interacts with TBC1D14 (By similarity). Interacts (phosphorylated form) with TRIM5 (By similarity). When phosphorylated at Ser-317, interacts with MEFV and BECN1 simultaneously. Interacts with TRIM21 and IRF3, in the presence of TRIM21 (By similarity). Interacts with SESN2 (PubMed:25040165). Interacts with SQSTM1 (PubMed:25040165). Interacts with C9orf72 (By similarity). Interacts with WDR45 (By similarity). Interacts with ATG13; this interaction is increased in the absence of TMEM39A (By similarity). Interacts with WIPI2 (By similarity). Interacts with ATP2A2 (By similarity). Interacts with AMBRA1 (By similarity). Interacts with Irgm1; promoting the coassembly of ULK1 and BECN1 (By similarity).</text>
</comment>
<comment type="interaction">
    <interactant intactId="EBI-8390771">
        <id>O70405</id>
    </interactant>
    <interactant intactId="EBI-10106464">
        <id>Q9DB70</id>
        <label>Fundc1</label>
    </interactant>
    <organismsDiffer>false</organismsDiffer>
    <experiments>2</experiments>
</comment>
<comment type="interaction">
    <interactant intactId="EBI-8390771">
        <id>O70405</id>
    </interactant>
    <interactant intactId="EBI-5327353">
        <id>P42859</id>
        <label>Htt</label>
    </interactant>
    <organismsDiffer>false</organismsDiffer>
    <experiments>4</experiments>
</comment>
<comment type="interaction">
    <interactant intactId="EBI-8390771">
        <id>O70405</id>
    </interactant>
    <interactant intactId="EBI-1571628">
        <id>Q9JLN9</id>
        <label>Mtor</label>
    </interactant>
    <organismsDiffer>false</organismsDiffer>
    <experiments>3</experiments>
</comment>
<comment type="interaction">
    <interactant intactId="EBI-8390771">
        <id>O70405</id>
    </interactant>
    <interactant intactId="EBI-3059266">
        <id>Q8IVP5</id>
        <label>FUNDC1</label>
    </interactant>
    <organismsDiffer>true</organismsDiffer>
    <experiments>3</experiments>
</comment>
<comment type="interaction">
    <interactant intactId="EBI-8390771">
        <id>O70405</id>
    </interactant>
    <interactant intactId="EBI-3939642">
        <id>P58004</id>
        <label>SESN2</label>
    </interactant>
    <organismsDiffer>true</organismsDiffer>
    <experiments>5</experiments>
</comment>
<comment type="interaction">
    <interactant intactId="EBI-8390771">
        <id>O70405</id>
    </interactant>
    <interactant intactId="EBI-307104">
        <id>Q13501</id>
        <label>SQSTM1</label>
    </interactant>
    <organismsDiffer>true</organismsDiffer>
    <experiments>2</experiments>
</comment>
<comment type="subcellular location">
    <subcellularLocation>
        <location evidence="6">Cytoplasm</location>
        <location evidence="6">Cytosol</location>
    </subcellularLocation>
    <subcellularLocation>
        <location evidence="6">Preautophagosomal structure</location>
    </subcellularLocation>
    <text>Under starvation conditions, is localized to puncate structures primarily representing the isolation membrane that sequesters a portion of the cytoplasm resulting in the formation of an autophagosome.</text>
</comment>
<comment type="PTM">
    <text evidence="6 7 8">Autophosphorylated. Phosphorylated under nutrient-rich conditions; dephosphorylated during starvation or following treatment with rapamycin. In response to nutrient limitation, phosphorylated and activated by AMPK, leading to activate autophagy. Under nutrient sufficiency, phosphorylated by MTOR/mTOR, disrupting the interaction with AMPK and preventing activation of ULK1.</text>
</comment>
<comment type="PTM">
    <text evidence="1">Ubiquitinated via 'Lys-63'-linkage by a complex composed of AMBRA1 and TRAF6 following autophagy induction, promoting ULK1 stability and kinase activity. Deubiquitinated by USP20; leading to ULK1 stability and autophagy initiation.</text>
</comment>
<comment type="PTM">
    <text evidence="10">Acetylated by KAT5/TIP60 under autophagy induction, promoting protein kinase activity.</text>
</comment>
<comment type="similarity">
    <text evidence="2">Belongs to the protein kinase superfamily. Ser/Thr protein kinase family. APG1/unc-51/ULK1 subfamily.</text>
</comment>
<organism>
    <name type="scientific">Mus musculus</name>
    <name type="common">Mouse</name>
    <dbReference type="NCBI Taxonomy" id="10090"/>
    <lineage>
        <taxon>Eukaryota</taxon>
        <taxon>Metazoa</taxon>
        <taxon>Chordata</taxon>
        <taxon>Craniata</taxon>
        <taxon>Vertebrata</taxon>
        <taxon>Euteleostomi</taxon>
        <taxon>Mammalia</taxon>
        <taxon>Eutheria</taxon>
        <taxon>Euarchontoglires</taxon>
        <taxon>Glires</taxon>
        <taxon>Rodentia</taxon>
        <taxon>Myomorpha</taxon>
        <taxon>Muroidea</taxon>
        <taxon>Muridae</taxon>
        <taxon>Murinae</taxon>
        <taxon>Mus</taxon>
        <taxon>Mus</taxon>
    </lineage>
</organism>
<evidence type="ECO:0000250" key="1">
    <source>
        <dbReference type="UniProtKB" id="O75385"/>
    </source>
</evidence>
<evidence type="ECO:0000255" key="2">
    <source>
        <dbReference type="PROSITE-ProRule" id="PRU00159"/>
    </source>
</evidence>
<evidence type="ECO:0000255" key="3">
    <source>
        <dbReference type="PROSITE-ProRule" id="PRU10027"/>
    </source>
</evidence>
<evidence type="ECO:0000256" key="4">
    <source>
        <dbReference type="SAM" id="MobiDB-lite"/>
    </source>
</evidence>
<evidence type="ECO:0000269" key="5">
    <source>
    </source>
</evidence>
<evidence type="ECO:0000269" key="6">
    <source>
    </source>
</evidence>
<evidence type="ECO:0000269" key="7">
    <source>
    </source>
</evidence>
<evidence type="ECO:0000269" key="8">
    <source>
    </source>
</evidence>
<evidence type="ECO:0000269" key="9">
    <source>
    </source>
</evidence>
<evidence type="ECO:0000269" key="10">
    <source>
    </source>
</evidence>
<evidence type="ECO:0000269" key="11">
    <source>
    </source>
</evidence>
<evidence type="ECO:0000269" key="12">
    <source>
    </source>
</evidence>
<evidence type="ECO:0000269" key="13">
    <source>
    </source>
</evidence>
<evidence type="ECO:0000305" key="14"/>
<evidence type="ECO:0000305" key="15">
    <source>
    </source>
</evidence>
<evidence type="ECO:0000305" key="16">
    <source>
    </source>
</evidence>
<evidence type="ECO:0007744" key="17">
    <source>
    </source>
</evidence>
<protein>
    <recommendedName>
        <fullName>Serine/threonine-protein kinase ULK1</fullName>
        <ecNumber evidence="15 16">2.7.11.1</ecNumber>
    </recommendedName>
    <alternativeName>
        <fullName>Serine/threonine-protein kinase Unc51.1</fullName>
    </alternativeName>
    <alternativeName>
        <fullName>Unc-51-like kinase 1</fullName>
    </alternativeName>
</protein>
<keyword id="KW-0007">Acetylation</keyword>
<keyword id="KW-0067">ATP-binding</keyword>
<keyword id="KW-0072">Autophagy</keyword>
<keyword id="KW-0963">Cytoplasm</keyword>
<keyword id="KW-0418">Kinase</keyword>
<keyword id="KW-0547">Nucleotide-binding</keyword>
<keyword id="KW-0597">Phosphoprotein</keyword>
<keyword id="KW-1185">Reference proteome</keyword>
<keyword id="KW-0723">Serine/threonine-protein kinase</keyword>
<keyword id="KW-0808">Transferase</keyword>
<keyword id="KW-0832">Ubl conjugation</keyword>